<sequence length="149" mass="16696">MADQLTEEQIAEFKEAGSLFDKDGDGTITTKELGTVMRSVGQNPTEAELQDMINEVDADGNGTIDFPEFLTMMARKMKDTDSEEEILEAFQGFDKDGNGFISAAELRHMMTNLGEKLTDEEVDEMIREADIDGDGQINYEEFVKMMMSK</sequence>
<gene>
    <name type="primary">CMD1</name>
</gene>
<dbReference type="EMBL" id="J05116">
    <property type="protein sequence ID" value="AAA32627.1"/>
    <property type="molecule type" value="Genomic_DNA"/>
</dbReference>
<dbReference type="PIR" id="A34450">
    <property type="entry name" value="MCUMAK"/>
</dbReference>
<dbReference type="SMR" id="P15094"/>
<dbReference type="GO" id="GO:0016460">
    <property type="term" value="C:myosin II complex"/>
    <property type="evidence" value="ECO:0007669"/>
    <property type="project" value="TreeGrafter"/>
</dbReference>
<dbReference type="GO" id="GO:0005509">
    <property type="term" value="F:calcium ion binding"/>
    <property type="evidence" value="ECO:0007669"/>
    <property type="project" value="InterPro"/>
</dbReference>
<dbReference type="CDD" id="cd00051">
    <property type="entry name" value="EFh"/>
    <property type="match status" value="2"/>
</dbReference>
<dbReference type="FunFam" id="1.10.238.10:FF:000034">
    <property type="entry name" value="Calmodulin"/>
    <property type="match status" value="1"/>
</dbReference>
<dbReference type="FunFam" id="1.10.238.10:FF:000006">
    <property type="entry name" value="Calmodulin 1"/>
    <property type="match status" value="1"/>
</dbReference>
<dbReference type="Gene3D" id="1.10.238.10">
    <property type="entry name" value="EF-hand"/>
    <property type="match status" value="3"/>
</dbReference>
<dbReference type="InterPro" id="IPR050230">
    <property type="entry name" value="CALM/Myosin/TropC-like"/>
</dbReference>
<dbReference type="InterPro" id="IPR011992">
    <property type="entry name" value="EF-hand-dom_pair"/>
</dbReference>
<dbReference type="InterPro" id="IPR018247">
    <property type="entry name" value="EF_Hand_1_Ca_BS"/>
</dbReference>
<dbReference type="InterPro" id="IPR002048">
    <property type="entry name" value="EF_hand_dom"/>
</dbReference>
<dbReference type="PANTHER" id="PTHR23048:SF0">
    <property type="entry name" value="CALMODULIN LIKE 3"/>
    <property type="match status" value="1"/>
</dbReference>
<dbReference type="PANTHER" id="PTHR23048">
    <property type="entry name" value="MYOSIN LIGHT CHAIN 1, 3"/>
    <property type="match status" value="1"/>
</dbReference>
<dbReference type="Pfam" id="PF13499">
    <property type="entry name" value="EF-hand_7"/>
    <property type="match status" value="2"/>
</dbReference>
<dbReference type="SMART" id="SM00054">
    <property type="entry name" value="EFh"/>
    <property type="match status" value="4"/>
</dbReference>
<dbReference type="SUPFAM" id="SSF47473">
    <property type="entry name" value="EF-hand"/>
    <property type="match status" value="1"/>
</dbReference>
<dbReference type="PROSITE" id="PS00018">
    <property type="entry name" value="EF_HAND_1"/>
    <property type="match status" value="4"/>
</dbReference>
<dbReference type="PROSITE" id="PS50222">
    <property type="entry name" value="EF_HAND_2"/>
    <property type="match status" value="4"/>
</dbReference>
<feature type="initiator methionine" description="Removed" evidence="1">
    <location>
        <position position="1"/>
    </location>
</feature>
<feature type="chain" id="PRO_0000198310" description="Calmodulin">
    <location>
        <begin position="2"/>
        <end position="149"/>
    </location>
</feature>
<feature type="domain" description="EF-hand 1" evidence="2">
    <location>
        <begin position="8"/>
        <end position="43"/>
    </location>
</feature>
<feature type="domain" description="EF-hand 2" evidence="2">
    <location>
        <begin position="44"/>
        <end position="79"/>
    </location>
</feature>
<feature type="domain" description="EF-hand 3" evidence="2">
    <location>
        <begin position="81"/>
        <end position="116"/>
    </location>
</feature>
<feature type="domain" description="EF-hand 4" evidence="2">
    <location>
        <begin position="117"/>
        <end position="149"/>
    </location>
</feature>
<feature type="binding site" evidence="2">
    <location>
        <position position="21"/>
    </location>
    <ligand>
        <name>Ca(2+)</name>
        <dbReference type="ChEBI" id="CHEBI:29108"/>
        <label>1</label>
    </ligand>
</feature>
<feature type="binding site" evidence="2">
    <location>
        <position position="23"/>
    </location>
    <ligand>
        <name>Ca(2+)</name>
        <dbReference type="ChEBI" id="CHEBI:29108"/>
        <label>1</label>
    </ligand>
</feature>
<feature type="binding site" evidence="2">
    <location>
        <position position="25"/>
    </location>
    <ligand>
        <name>Ca(2+)</name>
        <dbReference type="ChEBI" id="CHEBI:29108"/>
        <label>1</label>
    </ligand>
</feature>
<feature type="binding site" evidence="2">
    <location>
        <position position="27"/>
    </location>
    <ligand>
        <name>Ca(2+)</name>
        <dbReference type="ChEBI" id="CHEBI:29108"/>
        <label>1</label>
    </ligand>
</feature>
<feature type="binding site" evidence="2">
    <location>
        <position position="32"/>
    </location>
    <ligand>
        <name>Ca(2+)</name>
        <dbReference type="ChEBI" id="CHEBI:29108"/>
        <label>1</label>
    </ligand>
</feature>
<feature type="binding site" evidence="2">
    <location>
        <position position="57"/>
    </location>
    <ligand>
        <name>Ca(2+)</name>
        <dbReference type="ChEBI" id="CHEBI:29108"/>
        <label>2</label>
    </ligand>
</feature>
<feature type="binding site" evidence="2">
    <location>
        <position position="59"/>
    </location>
    <ligand>
        <name>Ca(2+)</name>
        <dbReference type="ChEBI" id="CHEBI:29108"/>
        <label>2</label>
    </ligand>
</feature>
<feature type="binding site" evidence="2">
    <location>
        <position position="61"/>
    </location>
    <ligand>
        <name>Ca(2+)</name>
        <dbReference type="ChEBI" id="CHEBI:29108"/>
        <label>2</label>
    </ligand>
</feature>
<feature type="binding site" evidence="2">
    <location>
        <position position="63"/>
    </location>
    <ligand>
        <name>Ca(2+)</name>
        <dbReference type="ChEBI" id="CHEBI:29108"/>
        <label>2</label>
    </ligand>
</feature>
<feature type="binding site" evidence="2">
    <location>
        <position position="68"/>
    </location>
    <ligand>
        <name>Ca(2+)</name>
        <dbReference type="ChEBI" id="CHEBI:29108"/>
        <label>2</label>
    </ligand>
</feature>
<feature type="binding site" evidence="2">
    <location>
        <position position="94"/>
    </location>
    <ligand>
        <name>Ca(2+)</name>
        <dbReference type="ChEBI" id="CHEBI:29108"/>
        <label>3</label>
    </ligand>
</feature>
<feature type="binding site" evidence="2">
    <location>
        <position position="96"/>
    </location>
    <ligand>
        <name>Ca(2+)</name>
        <dbReference type="ChEBI" id="CHEBI:29108"/>
        <label>3</label>
    </ligand>
</feature>
<feature type="binding site" evidence="2">
    <location>
        <position position="98"/>
    </location>
    <ligand>
        <name>Ca(2+)</name>
        <dbReference type="ChEBI" id="CHEBI:29108"/>
        <label>3</label>
    </ligand>
</feature>
<feature type="binding site" evidence="2">
    <location>
        <position position="105"/>
    </location>
    <ligand>
        <name>Ca(2+)</name>
        <dbReference type="ChEBI" id="CHEBI:29108"/>
        <label>3</label>
    </ligand>
</feature>
<feature type="binding site" evidence="2">
    <location>
        <position position="130"/>
    </location>
    <ligand>
        <name>Ca(2+)</name>
        <dbReference type="ChEBI" id="CHEBI:29108"/>
        <label>4</label>
    </ligand>
</feature>
<feature type="binding site" evidence="2">
    <location>
        <position position="132"/>
    </location>
    <ligand>
        <name>Ca(2+)</name>
        <dbReference type="ChEBI" id="CHEBI:29108"/>
        <label>4</label>
    </ligand>
</feature>
<feature type="binding site" evidence="2">
    <location>
        <position position="134"/>
    </location>
    <ligand>
        <name>Ca(2+)</name>
        <dbReference type="ChEBI" id="CHEBI:29108"/>
        <label>4</label>
    </ligand>
</feature>
<feature type="binding site" evidence="2">
    <location>
        <position position="136"/>
    </location>
    <ligand>
        <name>Ca(2+)</name>
        <dbReference type="ChEBI" id="CHEBI:29108"/>
        <label>4</label>
    </ligand>
</feature>
<feature type="binding site" evidence="2">
    <location>
        <position position="141"/>
    </location>
    <ligand>
        <name>Ca(2+)</name>
        <dbReference type="ChEBI" id="CHEBI:29108"/>
        <label>4</label>
    </ligand>
</feature>
<feature type="modified residue" description="N-acetylalanine" evidence="1">
    <location>
        <position position="2"/>
    </location>
</feature>
<evidence type="ECO:0000250" key="1"/>
<evidence type="ECO:0000255" key="2">
    <source>
        <dbReference type="PROSITE-ProRule" id="PRU00448"/>
    </source>
</evidence>
<evidence type="ECO:0000305" key="3"/>
<proteinExistence type="inferred from homology"/>
<comment type="function">
    <text>Calmodulin mediates the control of a large number of enzymes, ion channels and other proteins by Ca(2+). Among the enzymes to be stimulated by the calmodulin-Ca(2+) complex are a number of protein kinases and phosphatases.</text>
</comment>
<comment type="miscellaneous">
    <text>This protein has four functional calcium-binding sites.</text>
</comment>
<comment type="similarity">
    <text evidence="3">Belongs to the calmodulin family.</text>
</comment>
<protein>
    <recommendedName>
        <fullName>Calmodulin</fullName>
        <shortName>CaM</shortName>
    </recommendedName>
</protein>
<organism>
    <name type="scientific">Achlya klebsiana</name>
    <dbReference type="NCBI Taxonomy" id="4767"/>
    <lineage>
        <taxon>Eukaryota</taxon>
        <taxon>Sar</taxon>
        <taxon>Stramenopiles</taxon>
        <taxon>Oomycota</taxon>
        <taxon>Saprolegniales</taxon>
        <taxon>Saprolegniaceae</taxon>
        <taxon>Achlya</taxon>
    </lineage>
</organism>
<name>CALM_ACHKL</name>
<reference key="1">
    <citation type="journal article" date="1989" name="J. Biol. Chem.">
        <title>Structure and expression of fungal calmodulin gene.</title>
        <authorList>
            <person name="Lejohn H.B."/>
        </authorList>
    </citation>
    <scope>NUCLEOTIDE SEQUENCE [GENOMIC DNA]</scope>
</reference>
<accession>P15094</accession>
<keyword id="KW-0007">Acetylation</keyword>
<keyword id="KW-0106">Calcium</keyword>
<keyword id="KW-0479">Metal-binding</keyword>
<keyword id="KW-0677">Repeat</keyword>